<reference evidence="4" key="1">
    <citation type="journal article" date="2005" name="J. Biol. Chem.">
        <title>Isolation and characterization of novel cyclotides from Viola hederaceae: solution structure and anti-HIV activity of vhl-1, a leaf-specific expressed cyclotide.</title>
        <authorList>
            <person name="Chen B."/>
            <person name="Colgrave M.L."/>
            <person name="Daly N.L."/>
            <person name="Rosengren K.J."/>
            <person name="Gustafson K.R."/>
            <person name="Craik D.J."/>
        </authorList>
    </citation>
    <scope>PROTEIN SEQUENCE</scope>
    <scope>MASS SPECTROMETRY</scope>
</reference>
<sequence>SAIACGESCVYIPCFIPGCSCRNRVCYLN</sequence>
<protein>
    <recommendedName>
        <fullName>Cycloviolacin-H2</fullName>
    </recommendedName>
</protein>
<dbReference type="SMR" id="P85233"/>
<dbReference type="GO" id="GO:0006952">
    <property type="term" value="P:defense response"/>
    <property type="evidence" value="ECO:0007669"/>
    <property type="project" value="UniProtKB-KW"/>
</dbReference>
<dbReference type="InterPro" id="IPR005535">
    <property type="entry name" value="Cyclotide"/>
</dbReference>
<dbReference type="InterPro" id="IPR012323">
    <property type="entry name" value="Cyclotide_bracelet_CS"/>
</dbReference>
<dbReference type="InterPro" id="IPR036146">
    <property type="entry name" value="Cyclotide_sf"/>
</dbReference>
<dbReference type="Pfam" id="PF03784">
    <property type="entry name" value="Cyclotide"/>
    <property type="match status" value="1"/>
</dbReference>
<dbReference type="PIRSF" id="PIRSF037891">
    <property type="entry name" value="Cycloviolacin"/>
    <property type="match status" value="1"/>
</dbReference>
<dbReference type="SUPFAM" id="SSF57038">
    <property type="entry name" value="Cyclotides"/>
    <property type="match status" value="1"/>
</dbReference>
<dbReference type="PROSITE" id="PS51052">
    <property type="entry name" value="CYCLOTIDE"/>
    <property type="match status" value="1"/>
</dbReference>
<dbReference type="PROSITE" id="PS60008">
    <property type="entry name" value="CYCLOTIDE_BRACELET"/>
    <property type="match status" value="1"/>
</dbReference>
<organism>
    <name type="scientific">Viola hederacea</name>
    <name type="common">Australian violet</name>
    <dbReference type="NCBI Taxonomy" id="180952"/>
    <lineage>
        <taxon>Eukaryota</taxon>
        <taxon>Viridiplantae</taxon>
        <taxon>Streptophyta</taxon>
        <taxon>Embryophyta</taxon>
        <taxon>Tracheophyta</taxon>
        <taxon>Spermatophyta</taxon>
        <taxon>Magnoliopsida</taxon>
        <taxon>eudicotyledons</taxon>
        <taxon>Gunneridae</taxon>
        <taxon>Pentapetalae</taxon>
        <taxon>rosids</taxon>
        <taxon>fabids</taxon>
        <taxon>Malpighiales</taxon>
        <taxon>Violaceae</taxon>
        <taxon>Viola</taxon>
        <taxon>Viola subgen. Viola</taxon>
        <taxon>Viola sect. Erpetion</taxon>
    </lineage>
</organism>
<feature type="peptide" id="PRO_0000302126" description="Cycloviolacin-H2" evidence="2 3">
    <location>
        <begin position="1"/>
        <end position="29"/>
    </location>
</feature>
<feature type="disulfide bond" evidence="1 2">
    <location>
        <begin position="5"/>
        <end position="19"/>
    </location>
</feature>
<feature type="disulfide bond" evidence="1 2">
    <location>
        <begin position="9"/>
        <end position="21"/>
    </location>
</feature>
<feature type="disulfide bond" evidence="1 2">
    <location>
        <begin position="14"/>
        <end position="26"/>
    </location>
</feature>
<feature type="cross-link" description="Cyclopeptide (Ser-Asn)" evidence="3">
    <location>
        <begin position="1"/>
        <end position="29"/>
    </location>
</feature>
<comment type="function">
    <text evidence="4">Probably participates in a plant defense mechanism.</text>
</comment>
<comment type="domain">
    <text evidence="1">The presence of a 'disulfide through disulfide knot' structurally defines this protein as a knottin.</text>
</comment>
<comment type="PTM">
    <text evidence="2 3">This is a cyclic peptide.</text>
</comment>
<comment type="mass spectrometry"/>
<comment type="similarity">
    <text evidence="2">Belongs to the cyclotide family. Bracelet subfamily.</text>
</comment>
<comment type="caution">
    <text evidence="4">This peptide is cyclic. The start position was chosen by similarity to OAK1 (kalata-B1) for which the DNA sequence is known.</text>
</comment>
<name>CYH2_VIOHE</name>
<evidence type="ECO:0000250" key="1">
    <source>
        <dbReference type="UniProtKB" id="P56879"/>
    </source>
</evidence>
<evidence type="ECO:0000255" key="2">
    <source>
        <dbReference type="PROSITE-ProRule" id="PRU00395"/>
    </source>
</evidence>
<evidence type="ECO:0000269" key="3">
    <source>
    </source>
</evidence>
<evidence type="ECO:0000305" key="4"/>
<keyword id="KW-0903">Direct protein sequencing</keyword>
<keyword id="KW-1015">Disulfide bond</keyword>
<keyword id="KW-0960">Knottin</keyword>
<keyword id="KW-0611">Plant defense</keyword>
<proteinExistence type="evidence at protein level"/>
<accession>P85233</accession>